<proteinExistence type="inferred from homology"/>
<comment type="function">
    <text evidence="4">Hydroxynaphthalene reductase-like protein; part of the Pks2 gene cluster that mediates the formation of infectious structures (appressoria), enabling these fungi to kill insects faster (PubMed:29958281). The product of the Pks2 gene cluster is different from the one of Pks1 and has still not been identified (PubMed:29958281).</text>
</comment>
<comment type="similarity">
    <text evidence="6">Belongs to the short-chain dehydrogenases/reductases (SDR) family.</text>
</comment>
<accession>A0A0B4FP77</accession>
<sequence length="267" mass="28481">MASSEETPRSLAGKVALVTGAGRGIGKGIALELAKRGASLVVNYNSAEKPAQEVVDEISKTGSRAVAIKADITKVPEVSRLFQEALRHFGHLDIVVSNSGTEVFKPEEEVTEEDYDRVFNLNTRAQFFIAQHAYVHLRDGGRIVLMSSVAANMSGIPNHALYAGSKAAVEGFTRSFAVDAGHRKITVNAIAPGGVKTDMYDANAWHYVPNGKPGMPMEEIDKGLAAFCPLGRVAVPQDIGRVVAFLAHPDSEWVNGQVILLTGGSVT</sequence>
<feature type="chain" id="PRO_0000445814" description="Hydroxynaphthalene reductase-like protein Arp2">
    <location>
        <begin position="1"/>
        <end position="267"/>
    </location>
</feature>
<feature type="active site" description="Proton donor" evidence="2">
    <location>
        <position position="147"/>
    </location>
</feature>
<feature type="active site" description="Proton donor" evidence="2">
    <location>
        <position position="148"/>
    </location>
</feature>
<feature type="active site" description="Proton acceptor" evidence="3">
    <location>
        <position position="162"/>
    </location>
</feature>
<feature type="active site" description="Lowers pKa of active site Tyr" evidence="2">
    <location>
        <position position="166"/>
    </location>
</feature>
<feature type="binding site" evidence="1">
    <location>
        <position position="25"/>
    </location>
    <ligand>
        <name>NADP(+)</name>
        <dbReference type="ChEBI" id="CHEBI:58349"/>
    </ligand>
</feature>
<feature type="binding site" evidence="1">
    <location>
        <position position="45"/>
    </location>
    <ligand>
        <name>NADP(+)</name>
        <dbReference type="ChEBI" id="CHEBI:58349"/>
    </ligand>
</feature>
<feature type="binding site" evidence="1">
    <location>
        <position position="71"/>
    </location>
    <ligand>
        <name>NADP(+)</name>
        <dbReference type="ChEBI" id="CHEBI:58349"/>
    </ligand>
</feature>
<feature type="binding site" evidence="2">
    <location>
        <position position="98"/>
    </location>
    <ligand>
        <name>NADP(+)</name>
        <dbReference type="ChEBI" id="CHEBI:58349"/>
    </ligand>
</feature>
<feature type="binding site" evidence="2">
    <location>
        <position position="162"/>
    </location>
    <ligand>
        <name>NADP(+)</name>
        <dbReference type="ChEBI" id="CHEBI:58349"/>
    </ligand>
</feature>
<feature type="binding site" evidence="2">
    <location>
        <position position="166"/>
    </location>
    <ligand>
        <name>NADP(+)</name>
        <dbReference type="ChEBI" id="CHEBI:58349"/>
    </ligand>
</feature>
<feature type="binding site" evidence="2">
    <location>
        <position position="195"/>
    </location>
    <ligand>
        <name>NADP(+)</name>
        <dbReference type="ChEBI" id="CHEBI:58349"/>
    </ligand>
</feature>
<feature type="binding site" evidence="1">
    <location>
        <position position="197"/>
    </location>
    <ligand>
        <name>NADP(+)</name>
        <dbReference type="ChEBI" id="CHEBI:58349"/>
    </ligand>
</feature>
<name>ARP2_METBS</name>
<organism>
    <name type="scientific">Metarhizium brunneum (strain ARSEF 3297)</name>
    <dbReference type="NCBI Taxonomy" id="1276141"/>
    <lineage>
        <taxon>Eukaryota</taxon>
        <taxon>Fungi</taxon>
        <taxon>Dikarya</taxon>
        <taxon>Ascomycota</taxon>
        <taxon>Pezizomycotina</taxon>
        <taxon>Sordariomycetes</taxon>
        <taxon>Hypocreomycetidae</taxon>
        <taxon>Hypocreales</taxon>
        <taxon>Clavicipitaceae</taxon>
        <taxon>Metarhizium</taxon>
    </lineage>
</organism>
<dbReference type="EC" id="1.1.-.-" evidence="7"/>
<dbReference type="EMBL" id="AZNG01000004">
    <property type="protein sequence ID" value="KID76040.1"/>
    <property type="molecule type" value="Genomic_DNA"/>
</dbReference>
<dbReference type="SMR" id="A0A0B4FP77"/>
<dbReference type="GeneID" id="26241245"/>
<dbReference type="KEGG" id="mbrn:26241245"/>
<dbReference type="HOGENOM" id="CLU_010194_1_3_1"/>
<dbReference type="OrthoDB" id="4954at5529"/>
<dbReference type="GO" id="GO:0016491">
    <property type="term" value="F:oxidoreductase activity"/>
    <property type="evidence" value="ECO:0007669"/>
    <property type="project" value="UniProtKB-KW"/>
</dbReference>
<dbReference type="CDD" id="cd05362">
    <property type="entry name" value="THN_reductase-like_SDR_c"/>
    <property type="match status" value="1"/>
</dbReference>
<dbReference type="FunFam" id="3.40.50.720:FF:000084">
    <property type="entry name" value="Short-chain dehydrogenase reductase"/>
    <property type="match status" value="1"/>
</dbReference>
<dbReference type="Gene3D" id="3.40.50.720">
    <property type="entry name" value="NAD(P)-binding Rossmann-like Domain"/>
    <property type="match status" value="1"/>
</dbReference>
<dbReference type="InterPro" id="IPR036291">
    <property type="entry name" value="NAD(P)-bd_dom_sf"/>
</dbReference>
<dbReference type="InterPro" id="IPR020904">
    <property type="entry name" value="Sc_DH/Rdtase_CS"/>
</dbReference>
<dbReference type="InterPro" id="IPR002347">
    <property type="entry name" value="SDR_fam"/>
</dbReference>
<dbReference type="PANTHER" id="PTHR43639">
    <property type="entry name" value="OXIDOREDUCTASE, SHORT-CHAIN DEHYDROGENASE/REDUCTASE FAMILY (AFU_ORTHOLOGUE AFUA_5G02870)"/>
    <property type="match status" value="1"/>
</dbReference>
<dbReference type="PANTHER" id="PTHR43639:SF1">
    <property type="entry name" value="SHORT-CHAIN DEHYDROGENASE_REDUCTASE FAMILY PROTEIN"/>
    <property type="match status" value="1"/>
</dbReference>
<dbReference type="Pfam" id="PF13561">
    <property type="entry name" value="adh_short_C2"/>
    <property type="match status" value="1"/>
</dbReference>
<dbReference type="PRINTS" id="PR00081">
    <property type="entry name" value="GDHRDH"/>
</dbReference>
<dbReference type="PRINTS" id="PR00080">
    <property type="entry name" value="SDRFAMILY"/>
</dbReference>
<dbReference type="SMART" id="SM00822">
    <property type="entry name" value="PKS_KR"/>
    <property type="match status" value="1"/>
</dbReference>
<dbReference type="SUPFAM" id="SSF51735">
    <property type="entry name" value="NAD(P)-binding Rossmann-fold domains"/>
    <property type="match status" value="1"/>
</dbReference>
<dbReference type="PROSITE" id="PS00061">
    <property type="entry name" value="ADH_SHORT"/>
    <property type="match status" value="1"/>
</dbReference>
<keyword id="KW-0521">NADP</keyword>
<keyword id="KW-0560">Oxidoreductase</keyword>
<reference key="1">
    <citation type="journal article" date="2014" name="Proc. Natl. Acad. Sci. U.S.A.">
        <title>Trajectory and genomic determinants of fungal-pathogen speciation and host adaptation.</title>
        <authorList>
            <person name="Hu X."/>
            <person name="Xiao G."/>
            <person name="Zheng P."/>
            <person name="Shang Y."/>
            <person name="Su Y."/>
            <person name="Zhang X."/>
            <person name="Liu X."/>
            <person name="Zhan S."/>
            <person name="St Leger R.J."/>
            <person name="Wang C."/>
        </authorList>
    </citation>
    <scope>NUCLEOTIDE SEQUENCE [LARGE SCALE GENOMIC DNA]</scope>
    <source>
        <strain>ARSEF 3297</strain>
    </source>
</reference>
<reference key="2">
    <citation type="journal article" date="2018" name="PLoS Genet.">
        <title>Duplication of a Pks gene cluster and subsequent functional diversification facilitate environmental adaptation in Metarhizium species.</title>
        <authorList>
            <person name="Zeng G."/>
            <person name="Zhang P."/>
            <person name="Zhang Q."/>
            <person name="Zhao H."/>
            <person name="Li Z."/>
            <person name="Zhang X."/>
            <person name="Wang C."/>
            <person name="Yin W.B."/>
            <person name="Fang W."/>
        </authorList>
    </citation>
    <scope>IDENTIFICATION</scope>
    <scope>FUNCTION</scope>
</reference>
<gene>
    <name evidence="5" type="primary">Arp2</name>
    <name type="ORF">MBR_03975</name>
</gene>
<protein>
    <recommendedName>
        <fullName evidence="5">Hydroxynaphthalene reductase-like protein Arp2</fullName>
        <ecNumber evidence="7">1.1.-.-</ecNumber>
    </recommendedName>
</protein>
<evidence type="ECO:0000250" key="1">
    <source>
        <dbReference type="UniProtKB" id="L0E2Z4"/>
    </source>
</evidence>
<evidence type="ECO:0000250" key="2">
    <source>
        <dbReference type="UniProtKB" id="O93868"/>
    </source>
</evidence>
<evidence type="ECO:0000255" key="3">
    <source>
        <dbReference type="PROSITE-ProRule" id="PRU10001"/>
    </source>
</evidence>
<evidence type="ECO:0000269" key="4">
    <source>
    </source>
</evidence>
<evidence type="ECO:0000303" key="5">
    <source>
    </source>
</evidence>
<evidence type="ECO:0000305" key="6"/>
<evidence type="ECO:0000305" key="7">
    <source>
    </source>
</evidence>